<organism>
    <name type="scientific">Synechococcus sp. (strain RCC307)</name>
    <dbReference type="NCBI Taxonomy" id="316278"/>
    <lineage>
        <taxon>Bacteria</taxon>
        <taxon>Bacillati</taxon>
        <taxon>Cyanobacteriota</taxon>
        <taxon>Cyanophyceae</taxon>
        <taxon>Synechococcales</taxon>
        <taxon>Synechococcaceae</taxon>
        <taxon>Synechococcus</taxon>
    </lineage>
</organism>
<protein>
    <recommendedName>
        <fullName evidence="1">Small ribosomal subunit protein uS7</fullName>
    </recommendedName>
    <alternativeName>
        <fullName evidence="2">30S ribosomal protein S7</fullName>
    </alternativeName>
</protein>
<name>RS7_SYNR3</name>
<dbReference type="EMBL" id="CT978603">
    <property type="protein sequence ID" value="CAK29071.1"/>
    <property type="molecule type" value="Genomic_DNA"/>
</dbReference>
<dbReference type="SMR" id="A5GW12"/>
<dbReference type="STRING" id="316278.SynRCC307_2168"/>
<dbReference type="KEGG" id="syr:SynRCC307_2168"/>
<dbReference type="eggNOG" id="COG0049">
    <property type="taxonomic scope" value="Bacteria"/>
</dbReference>
<dbReference type="HOGENOM" id="CLU_072226_1_1_3"/>
<dbReference type="OrthoDB" id="9807653at2"/>
<dbReference type="Proteomes" id="UP000001115">
    <property type="component" value="Chromosome"/>
</dbReference>
<dbReference type="GO" id="GO:0015935">
    <property type="term" value="C:small ribosomal subunit"/>
    <property type="evidence" value="ECO:0007669"/>
    <property type="project" value="InterPro"/>
</dbReference>
<dbReference type="GO" id="GO:0019843">
    <property type="term" value="F:rRNA binding"/>
    <property type="evidence" value="ECO:0007669"/>
    <property type="project" value="UniProtKB-UniRule"/>
</dbReference>
<dbReference type="GO" id="GO:0003735">
    <property type="term" value="F:structural constituent of ribosome"/>
    <property type="evidence" value="ECO:0007669"/>
    <property type="project" value="InterPro"/>
</dbReference>
<dbReference type="GO" id="GO:0000049">
    <property type="term" value="F:tRNA binding"/>
    <property type="evidence" value="ECO:0007669"/>
    <property type="project" value="UniProtKB-UniRule"/>
</dbReference>
<dbReference type="GO" id="GO:0006412">
    <property type="term" value="P:translation"/>
    <property type="evidence" value="ECO:0007669"/>
    <property type="project" value="UniProtKB-UniRule"/>
</dbReference>
<dbReference type="CDD" id="cd14871">
    <property type="entry name" value="uS7_Chloroplast"/>
    <property type="match status" value="1"/>
</dbReference>
<dbReference type="FunFam" id="1.10.455.10:FF:000001">
    <property type="entry name" value="30S ribosomal protein S7"/>
    <property type="match status" value="1"/>
</dbReference>
<dbReference type="Gene3D" id="1.10.455.10">
    <property type="entry name" value="Ribosomal protein S7 domain"/>
    <property type="match status" value="1"/>
</dbReference>
<dbReference type="HAMAP" id="MF_00480_B">
    <property type="entry name" value="Ribosomal_uS7_B"/>
    <property type="match status" value="1"/>
</dbReference>
<dbReference type="InterPro" id="IPR000235">
    <property type="entry name" value="Ribosomal_uS7"/>
</dbReference>
<dbReference type="InterPro" id="IPR005717">
    <property type="entry name" value="Ribosomal_uS7_bac/org-type"/>
</dbReference>
<dbReference type="InterPro" id="IPR020606">
    <property type="entry name" value="Ribosomal_uS7_CS"/>
</dbReference>
<dbReference type="InterPro" id="IPR023798">
    <property type="entry name" value="Ribosomal_uS7_dom"/>
</dbReference>
<dbReference type="InterPro" id="IPR036823">
    <property type="entry name" value="Ribosomal_uS7_dom_sf"/>
</dbReference>
<dbReference type="NCBIfam" id="TIGR01029">
    <property type="entry name" value="rpsG_bact"/>
    <property type="match status" value="1"/>
</dbReference>
<dbReference type="PANTHER" id="PTHR11205">
    <property type="entry name" value="RIBOSOMAL PROTEIN S7"/>
    <property type="match status" value="1"/>
</dbReference>
<dbReference type="Pfam" id="PF00177">
    <property type="entry name" value="Ribosomal_S7"/>
    <property type="match status" value="1"/>
</dbReference>
<dbReference type="PIRSF" id="PIRSF002122">
    <property type="entry name" value="RPS7p_RPS7a_RPS5e_RPS7o"/>
    <property type="match status" value="1"/>
</dbReference>
<dbReference type="SUPFAM" id="SSF47973">
    <property type="entry name" value="Ribosomal protein S7"/>
    <property type="match status" value="1"/>
</dbReference>
<dbReference type="PROSITE" id="PS00052">
    <property type="entry name" value="RIBOSOMAL_S7"/>
    <property type="match status" value="1"/>
</dbReference>
<keyword id="KW-1185">Reference proteome</keyword>
<keyword id="KW-0687">Ribonucleoprotein</keyword>
<keyword id="KW-0689">Ribosomal protein</keyword>
<keyword id="KW-0694">RNA-binding</keyword>
<keyword id="KW-0699">rRNA-binding</keyword>
<keyword id="KW-0820">tRNA-binding</keyword>
<proteinExistence type="inferred from homology"/>
<reference key="1">
    <citation type="submission" date="2006-05" db="EMBL/GenBank/DDBJ databases">
        <authorList>
            <consortium name="Genoscope"/>
        </authorList>
    </citation>
    <scope>NUCLEOTIDE SEQUENCE [LARGE SCALE GENOMIC DNA]</scope>
    <source>
        <strain>RCC307</strain>
    </source>
</reference>
<accession>A5GW12</accession>
<evidence type="ECO:0000255" key="1">
    <source>
        <dbReference type="HAMAP-Rule" id="MF_00480"/>
    </source>
</evidence>
<evidence type="ECO:0000305" key="2"/>
<gene>
    <name evidence="1" type="primary">rpsG</name>
    <name evidence="1" type="synonym">rps7</name>
    <name type="ordered locus">SynRCC307_2168</name>
</gene>
<feature type="chain" id="PRO_1000014311" description="Small ribosomal subunit protein uS7">
    <location>
        <begin position="1"/>
        <end position="156"/>
    </location>
</feature>
<sequence>MSRRNAAVKRPILPDPQFNSRLASMMVARLMKHGKKSTAQRILSDAFGLIGERTGADPLEVFETAVRNSTPLVEVRARRVGGATYQVPMEVRQERGTAMALRWLVNFSRSRGGRSMAQKLAGELMDAANEAGSAVRKREETHKMAEANKAFAHYRY</sequence>
<comment type="function">
    <text evidence="1">One of the primary rRNA binding proteins, it binds directly to 16S rRNA where it nucleates assembly of the head domain of the 30S subunit. Is located at the subunit interface close to the decoding center, probably blocks exit of the E-site tRNA.</text>
</comment>
<comment type="subunit">
    <text evidence="1">Part of the 30S ribosomal subunit. Contacts proteins S9 and S11.</text>
</comment>
<comment type="similarity">
    <text evidence="1">Belongs to the universal ribosomal protein uS7 family.</text>
</comment>